<organism>
    <name type="scientific">Leptothrix cholodnii (strain ATCC 51168 / LMG 8142 / SP-6)</name>
    <name type="common">Leptothrix discophora (strain SP-6)</name>
    <dbReference type="NCBI Taxonomy" id="395495"/>
    <lineage>
        <taxon>Bacteria</taxon>
        <taxon>Pseudomonadati</taxon>
        <taxon>Pseudomonadota</taxon>
        <taxon>Betaproteobacteria</taxon>
        <taxon>Burkholderiales</taxon>
        <taxon>Sphaerotilaceae</taxon>
        <taxon>Leptothrix</taxon>
    </lineage>
</organism>
<feature type="chain" id="PRO_0000386019" description="GTPase Obg">
    <location>
        <begin position="1"/>
        <end position="369"/>
    </location>
</feature>
<feature type="domain" description="Obg" evidence="2">
    <location>
        <begin position="1"/>
        <end position="159"/>
    </location>
</feature>
<feature type="domain" description="OBG-type G" evidence="1">
    <location>
        <begin position="160"/>
        <end position="334"/>
    </location>
</feature>
<feature type="region of interest" description="Disordered" evidence="3">
    <location>
        <begin position="339"/>
        <end position="369"/>
    </location>
</feature>
<feature type="binding site" evidence="1">
    <location>
        <begin position="166"/>
        <end position="173"/>
    </location>
    <ligand>
        <name>GTP</name>
        <dbReference type="ChEBI" id="CHEBI:37565"/>
    </ligand>
</feature>
<feature type="binding site" evidence="1">
    <location>
        <position position="173"/>
    </location>
    <ligand>
        <name>Mg(2+)</name>
        <dbReference type="ChEBI" id="CHEBI:18420"/>
    </ligand>
</feature>
<feature type="binding site" evidence="1">
    <location>
        <begin position="191"/>
        <end position="195"/>
    </location>
    <ligand>
        <name>GTP</name>
        <dbReference type="ChEBI" id="CHEBI:37565"/>
    </ligand>
</feature>
<feature type="binding site" evidence="1">
    <location>
        <position position="193"/>
    </location>
    <ligand>
        <name>Mg(2+)</name>
        <dbReference type="ChEBI" id="CHEBI:18420"/>
    </ligand>
</feature>
<feature type="binding site" evidence="1">
    <location>
        <begin position="213"/>
        <end position="216"/>
    </location>
    <ligand>
        <name>GTP</name>
        <dbReference type="ChEBI" id="CHEBI:37565"/>
    </ligand>
</feature>
<feature type="binding site" evidence="1">
    <location>
        <begin position="284"/>
        <end position="287"/>
    </location>
    <ligand>
        <name>GTP</name>
        <dbReference type="ChEBI" id="CHEBI:37565"/>
    </ligand>
</feature>
<feature type="binding site" evidence="1">
    <location>
        <begin position="315"/>
        <end position="317"/>
    </location>
    <ligand>
        <name>GTP</name>
        <dbReference type="ChEBI" id="CHEBI:37565"/>
    </ligand>
</feature>
<evidence type="ECO:0000255" key="1">
    <source>
        <dbReference type="HAMAP-Rule" id="MF_01454"/>
    </source>
</evidence>
<evidence type="ECO:0000255" key="2">
    <source>
        <dbReference type="PROSITE-ProRule" id="PRU01231"/>
    </source>
</evidence>
<evidence type="ECO:0000256" key="3">
    <source>
        <dbReference type="SAM" id="MobiDB-lite"/>
    </source>
</evidence>
<name>OBG_LEPCP</name>
<accession>B1Y280</accession>
<dbReference type="EC" id="3.6.5.-" evidence="1"/>
<dbReference type="EMBL" id="CP001013">
    <property type="protein sequence ID" value="ACB35533.1"/>
    <property type="molecule type" value="Genomic_DNA"/>
</dbReference>
<dbReference type="RefSeq" id="WP_012348280.1">
    <property type="nucleotide sequence ID" value="NC_010524.1"/>
</dbReference>
<dbReference type="SMR" id="B1Y280"/>
<dbReference type="STRING" id="395495.Lcho_3275"/>
<dbReference type="KEGG" id="lch:Lcho_3275"/>
<dbReference type="eggNOG" id="COG0536">
    <property type="taxonomic scope" value="Bacteria"/>
</dbReference>
<dbReference type="HOGENOM" id="CLU_011747_2_0_4"/>
<dbReference type="OrthoDB" id="9807318at2"/>
<dbReference type="Proteomes" id="UP000001693">
    <property type="component" value="Chromosome"/>
</dbReference>
<dbReference type="GO" id="GO:0005737">
    <property type="term" value="C:cytoplasm"/>
    <property type="evidence" value="ECO:0007669"/>
    <property type="project" value="UniProtKB-SubCell"/>
</dbReference>
<dbReference type="GO" id="GO:0005525">
    <property type="term" value="F:GTP binding"/>
    <property type="evidence" value="ECO:0007669"/>
    <property type="project" value="UniProtKB-UniRule"/>
</dbReference>
<dbReference type="GO" id="GO:0003924">
    <property type="term" value="F:GTPase activity"/>
    <property type="evidence" value="ECO:0007669"/>
    <property type="project" value="UniProtKB-UniRule"/>
</dbReference>
<dbReference type="GO" id="GO:0000287">
    <property type="term" value="F:magnesium ion binding"/>
    <property type="evidence" value="ECO:0007669"/>
    <property type="project" value="InterPro"/>
</dbReference>
<dbReference type="GO" id="GO:0042254">
    <property type="term" value="P:ribosome biogenesis"/>
    <property type="evidence" value="ECO:0007669"/>
    <property type="project" value="UniProtKB-UniRule"/>
</dbReference>
<dbReference type="CDD" id="cd01898">
    <property type="entry name" value="Obg"/>
    <property type="match status" value="1"/>
</dbReference>
<dbReference type="FunFam" id="2.70.210.12:FF:000001">
    <property type="entry name" value="GTPase Obg"/>
    <property type="match status" value="1"/>
</dbReference>
<dbReference type="Gene3D" id="2.70.210.12">
    <property type="entry name" value="GTP1/OBG domain"/>
    <property type="match status" value="1"/>
</dbReference>
<dbReference type="Gene3D" id="3.40.50.300">
    <property type="entry name" value="P-loop containing nucleotide triphosphate hydrolases"/>
    <property type="match status" value="1"/>
</dbReference>
<dbReference type="HAMAP" id="MF_01454">
    <property type="entry name" value="GTPase_Obg"/>
    <property type="match status" value="1"/>
</dbReference>
<dbReference type="InterPro" id="IPR031167">
    <property type="entry name" value="G_OBG"/>
</dbReference>
<dbReference type="InterPro" id="IPR006073">
    <property type="entry name" value="GTP-bd"/>
</dbReference>
<dbReference type="InterPro" id="IPR014100">
    <property type="entry name" value="GTP-bd_Obg/CgtA"/>
</dbReference>
<dbReference type="InterPro" id="IPR006074">
    <property type="entry name" value="GTP1-OBG_CS"/>
</dbReference>
<dbReference type="InterPro" id="IPR006169">
    <property type="entry name" value="GTP1_OBG_dom"/>
</dbReference>
<dbReference type="InterPro" id="IPR036726">
    <property type="entry name" value="GTP1_OBG_dom_sf"/>
</dbReference>
<dbReference type="InterPro" id="IPR045086">
    <property type="entry name" value="OBG_GTPase"/>
</dbReference>
<dbReference type="InterPro" id="IPR027417">
    <property type="entry name" value="P-loop_NTPase"/>
</dbReference>
<dbReference type="InterPro" id="IPR005225">
    <property type="entry name" value="Small_GTP-bd"/>
</dbReference>
<dbReference type="NCBIfam" id="TIGR02729">
    <property type="entry name" value="Obg_CgtA"/>
    <property type="match status" value="1"/>
</dbReference>
<dbReference type="NCBIfam" id="NF008954">
    <property type="entry name" value="PRK12296.1"/>
    <property type="match status" value="1"/>
</dbReference>
<dbReference type="NCBIfam" id="NF008955">
    <property type="entry name" value="PRK12297.1"/>
    <property type="match status" value="1"/>
</dbReference>
<dbReference type="NCBIfam" id="NF008956">
    <property type="entry name" value="PRK12299.1"/>
    <property type="match status" value="1"/>
</dbReference>
<dbReference type="NCBIfam" id="TIGR00231">
    <property type="entry name" value="small_GTP"/>
    <property type="match status" value="1"/>
</dbReference>
<dbReference type="PANTHER" id="PTHR11702">
    <property type="entry name" value="DEVELOPMENTALLY REGULATED GTP-BINDING PROTEIN-RELATED"/>
    <property type="match status" value="1"/>
</dbReference>
<dbReference type="PANTHER" id="PTHR11702:SF31">
    <property type="entry name" value="MITOCHONDRIAL RIBOSOME-ASSOCIATED GTPASE 2"/>
    <property type="match status" value="1"/>
</dbReference>
<dbReference type="Pfam" id="PF01018">
    <property type="entry name" value="GTP1_OBG"/>
    <property type="match status" value="1"/>
</dbReference>
<dbReference type="Pfam" id="PF01926">
    <property type="entry name" value="MMR_HSR1"/>
    <property type="match status" value="1"/>
</dbReference>
<dbReference type="PIRSF" id="PIRSF002401">
    <property type="entry name" value="GTP_bd_Obg/CgtA"/>
    <property type="match status" value="1"/>
</dbReference>
<dbReference type="PRINTS" id="PR00326">
    <property type="entry name" value="GTP1OBG"/>
</dbReference>
<dbReference type="SUPFAM" id="SSF82051">
    <property type="entry name" value="Obg GTP-binding protein N-terminal domain"/>
    <property type="match status" value="1"/>
</dbReference>
<dbReference type="SUPFAM" id="SSF52540">
    <property type="entry name" value="P-loop containing nucleoside triphosphate hydrolases"/>
    <property type="match status" value="1"/>
</dbReference>
<dbReference type="PROSITE" id="PS51710">
    <property type="entry name" value="G_OBG"/>
    <property type="match status" value="1"/>
</dbReference>
<dbReference type="PROSITE" id="PS00905">
    <property type="entry name" value="GTP1_OBG"/>
    <property type="match status" value="1"/>
</dbReference>
<dbReference type="PROSITE" id="PS51883">
    <property type="entry name" value="OBG"/>
    <property type="match status" value="1"/>
</dbReference>
<keyword id="KW-0963">Cytoplasm</keyword>
<keyword id="KW-0342">GTP-binding</keyword>
<keyword id="KW-0378">Hydrolase</keyword>
<keyword id="KW-0460">Magnesium</keyword>
<keyword id="KW-0479">Metal-binding</keyword>
<keyword id="KW-0547">Nucleotide-binding</keyword>
<keyword id="KW-1185">Reference proteome</keyword>
<sequence>MKFVDEVTIDVTAGNGGAGCASFRREKFIPFGGPDGGNGGHGGNIFVVGDRNLNTLIDFRYIRRYTARNGEAGRGSDQFGAAGEDIVLRVPVGTIITDTETGEKIAELLVHDEKILLAKGGDGGFGNLHYKTSTNRAPRQKTPGWPGEVKNLKLELRVLADVGLLGMPNAGKSTLIAAISNARPKIADYPFTTLHPNLGVVRVGPSQSFVVADIPGLIEGASEGAGLGHRFLRHLQRTRVLLHMIDMAPFDDNVDPVAQAKAIVKELKKYDPALYEKPRWLVLNKLDMVPVEQRAALVKDFVKRMRWKGPVFEISALTREGCQGLIHAIYSHVASLQEQPEEVPDPRFTTNEDLSEAAPAPDRDDPRFR</sequence>
<reference key="1">
    <citation type="submission" date="2008-03" db="EMBL/GenBank/DDBJ databases">
        <title>Complete sequence of Leptothrix cholodnii SP-6.</title>
        <authorList>
            <consortium name="US DOE Joint Genome Institute"/>
            <person name="Copeland A."/>
            <person name="Lucas S."/>
            <person name="Lapidus A."/>
            <person name="Glavina del Rio T."/>
            <person name="Dalin E."/>
            <person name="Tice H."/>
            <person name="Bruce D."/>
            <person name="Goodwin L."/>
            <person name="Pitluck S."/>
            <person name="Chertkov O."/>
            <person name="Brettin T."/>
            <person name="Detter J.C."/>
            <person name="Han C."/>
            <person name="Kuske C.R."/>
            <person name="Schmutz J."/>
            <person name="Larimer F."/>
            <person name="Land M."/>
            <person name="Hauser L."/>
            <person name="Kyrpides N."/>
            <person name="Lykidis A."/>
            <person name="Emerson D."/>
            <person name="Richardson P."/>
        </authorList>
    </citation>
    <scope>NUCLEOTIDE SEQUENCE [LARGE SCALE GENOMIC DNA]</scope>
    <source>
        <strain>ATCC 51168 / LMG 8142 / SP-6</strain>
    </source>
</reference>
<comment type="function">
    <text evidence="1">An essential GTPase which binds GTP, GDP and possibly (p)ppGpp with moderate affinity, with high nucleotide exchange rates and a fairly low GTP hydrolysis rate. Plays a role in control of the cell cycle, stress response, ribosome biogenesis and in those bacteria that undergo differentiation, in morphogenesis control.</text>
</comment>
<comment type="cofactor">
    <cofactor evidence="1">
        <name>Mg(2+)</name>
        <dbReference type="ChEBI" id="CHEBI:18420"/>
    </cofactor>
</comment>
<comment type="subunit">
    <text evidence="1">Monomer.</text>
</comment>
<comment type="subcellular location">
    <subcellularLocation>
        <location evidence="1">Cytoplasm</location>
    </subcellularLocation>
</comment>
<comment type="similarity">
    <text evidence="1">Belongs to the TRAFAC class OBG-HflX-like GTPase superfamily. OBG GTPase family.</text>
</comment>
<protein>
    <recommendedName>
        <fullName evidence="1">GTPase Obg</fullName>
        <ecNumber evidence="1">3.6.5.-</ecNumber>
    </recommendedName>
    <alternativeName>
        <fullName evidence="1">GTP-binding protein Obg</fullName>
    </alternativeName>
</protein>
<proteinExistence type="inferred from homology"/>
<gene>
    <name evidence="1" type="primary">obg</name>
    <name type="ordered locus">Lcho_3275</name>
</gene>